<keyword id="KW-1003">Cell membrane</keyword>
<keyword id="KW-1015">Disulfide bond</keyword>
<keyword id="KW-0297">G-protein coupled receptor</keyword>
<keyword id="KW-0325">Glycoprotein</keyword>
<keyword id="KW-0472">Membrane</keyword>
<keyword id="KW-0552">Olfaction</keyword>
<keyword id="KW-0675">Receptor</keyword>
<keyword id="KW-1185">Reference proteome</keyword>
<keyword id="KW-0716">Sensory transduction</keyword>
<keyword id="KW-0807">Transducer</keyword>
<keyword id="KW-0812">Transmembrane</keyword>
<keyword id="KW-1133">Transmembrane helix</keyword>
<feature type="chain" id="PRO_0000150491" description="Olfactory receptor 2M2">
    <location>
        <begin position="1"/>
        <end position="347"/>
    </location>
</feature>
<feature type="topological domain" description="Extracellular" evidence="1">
    <location>
        <begin position="1"/>
        <end position="25"/>
    </location>
</feature>
<feature type="transmembrane region" description="Helical; Name=1" evidence="1">
    <location>
        <begin position="26"/>
        <end position="49"/>
    </location>
</feature>
<feature type="topological domain" description="Cytoplasmic" evidence="1">
    <location>
        <begin position="50"/>
        <end position="57"/>
    </location>
</feature>
<feature type="transmembrane region" description="Helical; Name=2" evidence="1">
    <location>
        <begin position="58"/>
        <end position="79"/>
    </location>
</feature>
<feature type="topological domain" description="Extracellular" evidence="1">
    <location>
        <begin position="80"/>
        <end position="100"/>
    </location>
</feature>
<feature type="transmembrane region" description="Helical; Name=3" evidence="1">
    <location>
        <begin position="101"/>
        <end position="120"/>
    </location>
</feature>
<feature type="topological domain" description="Cytoplasmic" evidence="1">
    <location>
        <begin position="121"/>
        <end position="139"/>
    </location>
</feature>
<feature type="transmembrane region" description="Helical; Name=4" evidence="1">
    <location>
        <begin position="140"/>
        <end position="158"/>
    </location>
</feature>
<feature type="topological domain" description="Extracellular" evidence="1">
    <location>
        <begin position="159"/>
        <end position="195"/>
    </location>
</feature>
<feature type="transmembrane region" description="Helical; Name=5" evidence="1">
    <location>
        <begin position="196"/>
        <end position="219"/>
    </location>
</feature>
<feature type="topological domain" description="Cytoplasmic" evidence="1">
    <location>
        <begin position="220"/>
        <end position="236"/>
    </location>
</feature>
<feature type="transmembrane region" description="Helical; Name=6" evidence="1">
    <location>
        <begin position="237"/>
        <end position="259"/>
    </location>
</feature>
<feature type="topological domain" description="Extracellular" evidence="1">
    <location>
        <begin position="260"/>
        <end position="272"/>
    </location>
</feature>
<feature type="transmembrane region" description="Helical; Name=7" evidence="1">
    <location>
        <begin position="273"/>
        <end position="292"/>
    </location>
</feature>
<feature type="topological domain" description="Cytoplasmic" evidence="1">
    <location>
        <begin position="293"/>
        <end position="347"/>
    </location>
</feature>
<feature type="glycosylation site" description="N-linked (GlcNAc...) asparagine" evidence="1">
    <location>
        <position position="5"/>
    </location>
</feature>
<feature type="glycosylation site" description="N-linked (GlcNAc...) asparagine" evidence="1">
    <location>
        <position position="190"/>
    </location>
</feature>
<feature type="disulfide bond" evidence="2">
    <location>
        <begin position="97"/>
        <end position="189"/>
    </location>
</feature>
<feature type="sequence variant" id="VAR_062026" description="In dbSNP:rs61156873.">
    <original>S</original>
    <variation>C</variation>
    <location>
        <position position="87"/>
    </location>
</feature>
<feature type="sequence variant" id="VAR_059990" description="In dbSNP:rs4244171.">
    <original>R</original>
    <variation>G</variation>
    <location>
        <position position="220"/>
    </location>
</feature>
<feature type="sequence variant" id="VAR_059991" description="In dbSNP:rs4916104.">
    <original>C</original>
    <variation>R</variation>
    <location>
        <position position="235"/>
    </location>
</feature>
<feature type="sequence variant" id="VAR_034179" description="In dbSNP:rs9435890.">
    <original>A</original>
    <variation>T</variation>
    <location>
        <position position="237"/>
    </location>
</feature>
<feature type="sequence conflict" description="In Ref. 2; AAK95101." evidence="3" ref="2">
    <original>M</original>
    <variation>K</variation>
    <location>
        <position position="72"/>
    </location>
</feature>
<organism>
    <name type="scientific">Homo sapiens</name>
    <name type="common">Human</name>
    <dbReference type="NCBI Taxonomy" id="9606"/>
    <lineage>
        <taxon>Eukaryota</taxon>
        <taxon>Metazoa</taxon>
        <taxon>Chordata</taxon>
        <taxon>Craniata</taxon>
        <taxon>Vertebrata</taxon>
        <taxon>Euteleostomi</taxon>
        <taxon>Mammalia</taxon>
        <taxon>Eutheria</taxon>
        <taxon>Euarchontoglires</taxon>
        <taxon>Primates</taxon>
        <taxon>Haplorrhini</taxon>
        <taxon>Catarrhini</taxon>
        <taxon>Hominidae</taxon>
        <taxon>Homo</taxon>
    </lineage>
</organism>
<evidence type="ECO:0000255" key="1"/>
<evidence type="ECO:0000255" key="2">
    <source>
        <dbReference type="PROSITE-ProRule" id="PRU00521"/>
    </source>
</evidence>
<evidence type="ECO:0000305" key="3"/>
<accession>Q96R28</accession>
<accession>A3KFT4</accession>
<gene>
    <name type="primary">OR2M2</name>
</gene>
<comment type="function">
    <text evidence="3">Odorant receptor.</text>
</comment>
<comment type="subcellular location">
    <subcellularLocation>
        <location>Cell membrane</location>
        <topology>Multi-pass membrane protein</topology>
    </subcellularLocation>
</comment>
<comment type="similarity">
    <text evidence="2">Belongs to the G-protein coupled receptor 1 family.</text>
</comment>
<comment type="online information" name="Human Olfactory Receptor Data Exploratorium (HORDE)">
    <link uri="http://genome.weizmann.ac.il/horde/card/index/symbol:OR2M2"/>
</comment>
<reference key="1">
    <citation type="journal article" date="2006" name="Nature">
        <title>The DNA sequence and biological annotation of human chromosome 1.</title>
        <authorList>
            <person name="Gregory S.G."/>
            <person name="Barlow K.F."/>
            <person name="McLay K.E."/>
            <person name="Kaul R."/>
            <person name="Swarbreck D."/>
            <person name="Dunham A."/>
            <person name="Scott C.E."/>
            <person name="Howe K.L."/>
            <person name="Woodfine K."/>
            <person name="Spencer C.C.A."/>
            <person name="Jones M.C."/>
            <person name="Gillson C."/>
            <person name="Searle S."/>
            <person name="Zhou Y."/>
            <person name="Kokocinski F."/>
            <person name="McDonald L."/>
            <person name="Evans R."/>
            <person name="Phillips K."/>
            <person name="Atkinson A."/>
            <person name="Cooper R."/>
            <person name="Jones C."/>
            <person name="Hall R.E."/>
            <person name="Andrews T.D."/>
            <person name="Lloyd C."/>
            <person name="Ainscough R."/>
            <person name="Almeida J.P."/>
            <person name="Ambrose K.D."/>
            <person name="Anderson F."/>
            <person name="Andrew R.W."/>
            <person name="Ashwell R.I.S."/>
            <person name="Aubin K."/>
            <person name="Babbage A.K."/>
            <person name="Bagguley C.L."/>
            <person name="Bailey J."/>
            <person name="Beasley H."/>
            <person name="Bethel G."/>
            <person name="Bird C.P."/>
            <person name="Bray-Allen S."/>
            <person name="Brown J.Y."/>
            <person name="Brown A.J."/>
            <person name="Buckley D."/>
            <person name="Burton J."/>
            <person name="Bye J."/>
            <person name="Carder C."/>
            <person name="Chapman J.C."/>
            <person name="Clark S.Y."/>
            <person name="Clarke G."/>
            <person name="Clee C."/>
            <person name="Cobley V."/>
            <person name="Collier R.E."/>
            <person name="Corby N."/>
            <person name="Coville G.J."/>
            <person name="Davies J."/>
            <person name="Deadman R."/>
            <person name="Dunn M."/>
            <person name="Earthrowl M."/>
            <person name="Ellington A.G."/>
            <person name="Errington H."/>
            <person name="Frankish A."/>
            <person name="Frankland J."/>
            <person name="French L."/>
            <person name="Garner P."/>
            <person name="Garnett J."/>
            <person name="Gay L."/>
            <person name="Ghori M.R.J."/>
            <person name="Gibson R."/>
            <person name="Gilby L.M."/>
            <person name="Gillett W."/>
            <person name="Glithero R.J."/>
            <person name="Grafham D.V."/>
            <person name="Griffiths C."/>
            <person name="Griffiths-Jones S."/>
            <person name="Grocock R."/>
            <person name="Hammond S."/>
            <person name="Harrison E.S.I."/>
            <person name="Hart E."/>
            <person name="Haugen E."/>
            <person name="Heath P.D."/>
            <person name="Holmes S."/>
            <person name="Holt K."/>
            <person name="Howden P.J."/>
            <person name="Hunt A.R."/>
            <person name="Hunt S.E."/>
            <person name="Hunter G."/>
            <person name="Isherwood J."/>
            <person name="James R."/>
            <person name="Johnson C."/>
            <person name="Johnson D."/>
            <person name="Joy A."/>
            <person name="Kay M."/>
            <person name="Kershaw J.K."/>
            <person name="Kibukawa M."/>
            <person name="Kimberley A.M."/>
            <person name="King A."/>
            <person name="Knights A.J."/>
            <person name="Lad H."/>
            <person name="Laird G."/>
            <person name="Lawlor S."/>
            <person name="Leongamornlert D.A."/>
            <person name="Lloyd D.M."/>
            <person name="Loveland J."/>
            <person name="Lovell J."/>
            <person name="Lush M.J."/>
            <person name="Lyne R."/>
            <person name="Martin S."/>
            <person name="Mashreghi-Mohammadi M."/>
            <person name="Matthews L."/>
            <person name="Matthews N.S.W."/>
            <person name="McLaren S."/>
            <person name="Milne S."/>
            <person name="Mistry S."/>
            <person name="Moore M.J.F."/>
            <person name="Nickerson T."/>
            <person name="O'Dell C.N."/>
            <person name="Oliver K."/>
            <person name="Palmeiri A."/>
            <person name="Palmer S.A."/>
            <person name="Parker A."/>
            <person name="Patel D."/>
            <person name="Pearce A.V."/>
            <person name="Peck A.I."/>
            <person name="Pelan S."/>
            <person name="Phelps K."/>
            <person name="Phillimore B.J."/>
            <person name="Plumb R."/>
            <person name="Rajan J."/>
            <person name="Raymond C."/>
            <person name="Rouse G."/>
            <person name="Saenphimmachak C."/>
            <person name="Sehra H.K."/>
            <person name="Sheridan E."/>
            <person name="Shownkeen R."/>
            <person name="Sims S."/>
            <person name="Skuce C.D."/>
            <person name="Smith M."/>
            <person name="Steward C."/>
            <person name="Subramanian S."/>
            <person name="Sycamore N."/>
            <person name="Tracey A."/>
            <person name="Tromans A."/>
            <person name="Van Helmond Z."/>
            <person name="Wall M."/>
            <person name="Wallis J.M."/>
            <person name="White S."/>
            <person name="Whitehead S.L."/>
            <person name="Wilkinson J.E."/>
            <person name="Willey D.L."/>
            <person name="Williams H."/>
            <person name="Wilming L."/>
            <person name="Wray P.W."/>
            <person name="Wu Z."/>
            <person name="Coulson A."/>
            <person name="Vaudin M."/>
            <person name="Sulston J.E."/>
            <person name="Durbin R.M."/>
            <person name="Hubbard T."/>
            <person name="Wooster R."/>
            <person name="Dunham I."/>
            <person name="Carter N.P."/>
            <person name="McVean G."/>
            <person name="Ross M.T."/>
            <person name="Harrow J."/>
            <person name="Olson M.V."/>
            <person name="Beck S."/>
            <person name="Rogers J."/>
            <person name="Bentley D.R."/>
        </authorList>
    </citation>
    <scope>NUCLEOTIDE SEQUENCE [LARGE SCALE GENOMIC DNA]</scope>
</reference>
<reference key="2">
    <citation type="journal article" date="2002" name="Genomics">
        <title>DEFOG: a practical scheme for deciphering families of genes.</title>
        <authorList>
            <person name="Fuchs T."/>
            <person name="Malecova B."/>
            <person name="Linhart C."/>
            <person name="Sharan R."/>
            <person name="Khen M."/>
            <person name="Herwig R."/>
            <person name="Shmulevich D."/>
            <person name="Elkon R."/>
            <person name="Steinfath M."/>
            <person name="O'Brien J.K."/>
            <person name="Radelof U."/>
            <person name="Lehrach H."/>
            <person name="Lancet D."/>
            <person name="Shamir R."/>
        </authorList>
    </citation>
    <scope>NUCLEOTIDE SEQUENCE [GENOMIC DNA] OF 68-283</scope>
</reference>
<dbReference type="EMBL" id="AL592313">
    <property type="status" value="NOT_ANNOTATED_CDS"/>
    <property type="molecule type" value="Genomic_DNA"/>
</dbReference>
<dbReference type="EMBL" id="AF399616">
    <property type="protein sequence ID" value="AAK95101.1"/>
    <property type="molecule type" value="Genomic_DNA"/>
</dbReference>
<dbReference type="CCDS" id="CCDS31106.1"/>
<dbReference type="RefSeq" id="NP_001004688.1">
    <property type="nucleotide sequence ID" value="NM_001004688.2"/>
</dbReference>
<dbReference type="SMR" id="Q96R28"/>
<dbReference type="FunCoup" id="Q96R28">
    <property type="interactions" value="458"/>
</dbReference>
<dbReference type="STRING" id="9606.ENSP00000492974"/>
<dbReference type="GlyCosmos" id="Q96R28">
    <property type="glycosylation" value="2 sites, No reported glycans"/>
</dbReference>
<dbReference type="GlyGen" id="Q96R28">
    <property type="glycosylation" value="2 sites"/>
</dbReference>
<dbReference type="iPTMnet" id="Q96R28"/>
<dbReference type="PhosphoSitePlus" id="Q96R28"/>
<dbReference type="BioMuta" id="OR2M2"/>
<dbReference type="DMDM" id="85541044"/>
<dbReference type="MassIVE" id="Q96R28"/>
<dbReference type="PaxDb" id="9606-ENSP00000352710"/>
<dbReference type="PeptideAtlas" id="Q96R28"/>
<dbReference type="Antibodypedia" id="57431">
    <property type="antibodies" value="82 antibodies from 18 providers"/>
</dbReference>
<dbReference type="DNASU" id="391194"/>
<dbReference type="Ensembl" id="ENST00000641211.1">
    <property type="protein sequence ID" value="ENSP00000492974.1"/>
    <property type="gene ID" value="ENSG00000198601.4"/>
</dbReference>
<dbReference type="Ensembl" id="ENST00000641836.1">
    <property type="protein sequence ID" value="ENSP00000493201.1"/>
    <property type="gene ID" value="ENSG00000198601.4"/>
</dbReference>
<dbReference type="GeneID" id="391194"/>
<dbReference type="KEGG" id="hsa:391194"/>
<dbReference type="MANE-Select" id="ENST00000641836.1">
    <property type="protein sequence ID" value="ENSP00000493201.1"/>
    <property type="RefSeq nucleotide sequence ID" value="NM_001004688.2"/>
    <property type="RefSeq protein sequence ID" value="NP_001004688.1"/>
</dbReference>
<dbReference type="UCSC" id="uc010pzf.2">
    <property type="organism name" value="human"/>
</dbReference>
<dbReference type="AGR" id="HGNC:8268"/>
<dbReference type="CTD" id="391194"/>
<dbReference type="GeneCards" id="OR2M2"/>
<dbReference type="HGNC" id="HGNC:8268">
    <property type="gene designation" value="OR2M2"/>
</dbReference>
<dbReference type="HPA" id="ENSG00000198601">
    <property type="expression patterns" value="Not detected"/>
</dbReference>
<dbReference type="neXtProt" id="NX_Q96R28"/>
<dbReference type="PharmGKB" id="PA32192"/>
<dbReference type="VEuPathDB" id="HostDB:ENSG00000198601"/>
<dbReference type="eggNOG" id="ENOG502SHXQ">
    <property type="taxonomic scope" value="Eukaryota"/>
</dbReference>
<dbReference type="GeneTree" id="ENSGT01130000278260"/>
<dbReference type="HOGENOM" id="CLU_012526_1_2_1"/>
<dbReference type="InParanoid" id="Q96R28"/>
<dbReference type="OMA" id="GACLFMY"/>
<dbReference type="OrthoDB" id="9831471at2759"/>
<dbReference type="PAN-GO" id="Q96R28">
    <property type="GO annotations" value="0 GO annotations based on evolutionary models"/>
</dbReference>
<dbReference type="PhylomeDB" id="Q96R28"/>
<dbReference type="TreeFam" id="TF337295"/>
<dbReference type="PathwayCommons" id="Q96R28"/>
<dbReference type="Reactome" id="R-HSA-381753">
    <property type="pathway name" value="Olfactory Signaling Pathway"/>
</dbReference>
<dbReference type="Reactome" id="R-HSA-9752946">
    <property type="pathway name" value="Expression and translocation of olfactory receptors"/>
</dbReference>
<dbReference type="BioGRID-ORCS" id="391194">
    <property type="hits" value="8 hits in 667 CRISPR screens"/>
</dbReference>
<dbReference type="GeneWiki" id="OR2M2"/>
<dbReference type="GenomeRNAi" id="391194"/>
<dbReference type="Pharos" id="Q96R28">
    <property type="development level" value="Tdark"/>
</dbReference>
<dbReference type="PRO" id="PR:Q96R28"/>
<dbReference type="Proteomes" id="UP000005640">
    <property type="component" value="Chromosome 1"/>
</dbReference>
<dbReference type="RNAct" id="Q96R28">
    <property type="molecule type" value="protein"/>
</dbReference>
<dbReference type="Bgee" id="ENSG00000198601">
    <property type="expression patterns" value="Expressed in male germ line stem cell (sensu Vertebrata) in testis and 1 other cell type or tissue"/>
</dbReference>
<dbReference type="ExpressionAtlas" id="Q96R28">
    <property type="expression patterns" value="baseline and differential"/>
</dbReference>
<dbReference type="GO" id="GO:0005886">
    <property type="term" value="C:plasma membrane"/>
    <property type="evidence" value="ECO:0000318"/>
    <property type="project" value="GO_Central"/>
</dbReference>
<dbReference type="GO" id="GO:0004930">
    <property type="term" value="F:G protein-coupled receptor activity"/>
    <property type="evidence" value="ECO:0007669"/>
    <property type="project" value="UniProtKB-KW"/>
</dbReference>
<dbReference type="GO" id="GO:0004984">
    <property type="term" value="F:olfactory receptor activity"/>
    <property type="evidence" value="ECO:0000318"/>
    <property type="project" value="GO_Central"/>
</dbReference>
<dbReference type="GO" id="GO:0050911">
    <property type="term" value="P:detection of chemical stimulus involved in sensory perception of smell"/>
    <property type="evidence" value="ECO:0000318"/>
    <property type="project" value="GO_Central"/>
</dbReference>
<dbReference type="CDD" id="cd15421">
    <property type="entry name" value="7tmA_OR2T-like"/>
    <property type="match status" value="1"/>
</dbReference>
<dbReference type="FunFam" id="1.10.1220.70:FF:000001">
    <property type="entry name" value="Olfactory receptor"/>
    <property type="match status" value="1"/>
</dbReference>
<dbReference type="FunFam" id="1.20.1070.10:FF:000008">
    <property type="entry name" value="Olfactory receptor"/>
    <property type="match status" value="1"/>
</dbReference>
<dbReference type="Gene3D" id="1.20.1070.10">
    <property type="entry name" value="Rhodopsin 7-helix transmembrane proteins"/>
    <property type="match status" value="1"/>
</dbReference>
<dbReference type="InterPro" id="IPR000276">
    <property type="entry name" value="GPCR_Rhodpsn"/>
</dbReference>
<dbReference type="InterPro" id="IPR017452">
    <property type="entry name" value="GPCR_Rhodpsn_7TM"/>
</dbReference>
<dbReference type="InterPro" id="IPR000725">
    <property type="entry name" value="Olfact_rcpt"/>
</dbReference>
<dbReference type="PANTHER" id="PTHR26453">
    <property type="entry name" value="OLFACTORY RECEPTOR"/>
    <property type="match status" value="1"/>
</dbReference>
<dbReference type="Pfam" id="PF13853">
    <property type="entry name" value="7tm_4"/>
    <property type="match status" value="1"/>
</dbReference>
<dbReference type="PRINTS" id="PR00237">
    <property type="entry name" value="GPCRRHODOPSN"/>
</dbReference>
<dbReference type="PRINTS" id="PR00245">
    <property type="entry name" value="OLFACTORYR"/>
</dbReference>
<dbReference type="SMART" id="SM01381">
    <property type="entry name" value="7TM_GPCR_Srsx"/>
    <property type="match status" value="1"/>
</dbReference>
<dbReference type="SUPFAM" id="SSF81321">
    <property type="entry name" value="Family A G protein-coupled receptor-like"/>
    <property type="match status" value="1"/>
</dbReference>
<dbReference type="PROSITE" id="PS00237">
    <property type="entry name" value="G_PROTEIN_RECEP_F1_1"/>
    <property type="match status" value="1"/>
</dbReference>
<dbReference type="PROSITE" id="PS50262">
    <property type="entry name" value="G_PROTEIN_RECEP_F1_2"/>
    <property type="match status" value="1"/>
</dbReference>
<proteinExistence type="inferred from homology"/>
<name>OR2M2_HUMAN</name>
<protein>
    <recommendedName>
        <fullName>Olfactory receptor 2M2</fullName>
    </recommendedName>
    <alternativeName>
        <fullName>OST423</fullName>
    </alternativeName>
</protein>
<sequence>MAWENQTFNSDFILLGIFNHSPPHTFLFFLVLGIFLVAFMGNSVMVLLIYLDTQLHTPMYFLLSQLSLMDLMLICTTVPKMAFNYLSGSKSISMAGCVTQIFFYISLSGSECFLLAVMAYDRYIAICHPLRYTNLMNPKICGLMATFSWILGSTDGIIDAVATFSFSFCGSREIAHFFCEFPSLLILSCNDTSIFEEVIFICCIVMLVFPVAIIIASYARVILAVIHMGSGEGRCKAFTTCSSHLMVVGMYYGAALFMYIRPTSDHSPTQDKMVSVFYTILTPMLNPLIYSLRNKEVTRAFMKILGKGKSESELPHKLYVLLFAKFFFLISIFFYDVKILALIMYIA</sequence>